<feature type="chain" id="PRO_1000093914" description="Holo-[acyl-carrier-protein] synthase">
    <location>
        <begin position="1"/>
        <end position="126"/>
    </location>
</feature>
<feature type="binding site" evidence="1">
    <location>
        <position position="9"/>
    </location>
    <ligand>
        <name>Mg(2+)</name>
        <dbReference type="ChEBI" id="CHEBI:18420"/>
    </ligand>
</feature>
<feature type="binding site" evidence="1">
    <location>
        <position position="58"/>
    </location>
    <ligand>
        <name>Mg(2+)</name>
        <dbReference type="ChEBI" id="CHEBI:18420"/>
    </ligand>
</feature>
<accession>B4TE11</accession>
<protein>
    <recommendedName>
        <fullName evidence="1">Holo-[acyl-carrier-protein] synthase</fullName>
        <shortName evidence="1">Holo-ACP synthase</shortName>
        <ecNumber evidence="1">2.7.8.7</ecNumber>
    </recommendedName>
    <alternativeName>
        <fullName evidence="1">4'-phosphopantetheinyl transferase AcpS</fullName>
    </alternativeName>
</protein>
<proteinExistence type="inferred from homology"/>
<evidence type="ECO:0000255" key="1">
    <source>
        <dbReference type="HAMAP-Rule" id="MF_00101"/>
    </source>
</evidence>
<dbReference type="EC" id="2.7.8.7" evidence="1"/>
<dbReference type="EMBL" id="CP001120">
    <property type="protein sequence ID" value="ACF66988.1"/>
    <property type="molecule type" value="Genomic_DNA"/>
</dbReference>
<dbReference type="RefSeq" id="WP_000986043.1">
    <property type="nucleotide sequence ID" value="NC_011083.1"/>
</dbReference>
<dbReference type="SMR" id="B4TE11"/>
<dbReference type="GeneID" id="66757004"/>
<dbReference type="KEGG" id="seh:SeHA_C2843"/>
<dbReference type="HOGENOM" id="CLU_089696_3_1_6"/>
<dbReference type="Proteomes" id="UP000001866">
    <property type="component" value="Chromosome"/>
</dbReference>
<dbReference type="GO" id="GO:0005737">
    <property type="term" value="C:cytoplasm"/>
    <property type="evidence" value="ECO:0007669"/>
    <property type="project" value="UniProtKB-SubCell"/>
</dbReference>
<dbReference type="GO" id="GO:0008897">
    <property type="term" value="F:holo-[acyl-carrier-protein] synthase activity"/>
    <property type="evidence" value="ECO:0007669"/>
    <property type="project" value="UniProtKB-UniRule"/>
</dbReference>
<dbReference type="GO" id="GO:0000287">
    <property type="term" value="F:magnesium ion binding"/>
    <property type="evidence" value="ECO:0007669"/>
    <property type="project" value="UniProtKB-UniRule"/>
</dbReference>
<dbReference type="GO" id="GO:0006633">
    <property type="term" value="P:fatty acid biosynthetic process"/>
    <property type="evidence" value="ECO:0007669"/>
    <property type="project" value="UniProtKB-UniRule"/>
</dbReference>
<dbReference type="FunFam" id="3.90.470.20:FF:000001">
    <property type="entry name" value="Holo-[acyl-carrier-protein] synthase"/>
    <property type="match status" value="1"/>
</dbReference>
<dbReference type="Gene3D" id="3.90.470.20">
    <property type="entry name" value="4'-phosphopantetheinyl transferase domain"/>
    <property type="match status" value="1"/>
</dbReference>
<dbReference type="HAMAP" id="MF_00101">
    <property type="entry name" value="AcpS"/>
    <property type="match status" value="1"/>
</dbReference>
<dbReference type="InterPro" id="IPR008278">
    <property type="entry name" value="4-PPantetheinyl_Trfase_dom"/>
</dbReference>
<dbReference type="InterPro" id="IPR037143">
    <property type="entry name" value="4-PPantetheinyl_Trfase_dom_sf"/>
</dbReference>
<dbReference type="InterPro" id="IPR002582">
    <property type="entry name" value="ACPS"/>
</dbReference>
<dbReference type="InterPro" id="IPR004568">
    <property type="entry name" value="Ppantetheine-prot_Trfase_dom"/>
</dbReference>
<dbReference type="NCBIfam" id="TIGR00516">
    <property type="entry name" value="acpS"/>
    <property type="match status" value="1"/>
</dbReference>
<dbReference type="NCBIfam" id="TIGR00556">
    <property type="entry name" value="pantethn_trn"/>
    <property type="match status" value="1"/>
</dbReference>
<dbReference type="Pfam" id="PF01648">
    <property type="entry name" value="ACPS"/>
    <property type="match status" value="1"/>
</dbReference>
<dbReference type="SUPFAM" id="SSF56214">
    <property type="entry name" value="4'-phosphopantetheinyl transferase"/>
    <property type="match status" value="1"/>
</dbReference>
<sequence length="126" mass="14070">MAILGLGTDIVEIARIEAVISRSGERLARRVLSDNEWAIWETHQQPVRFLAKRFAVKEAAAKAFGTGIRNGLAFNQFEVFNDELGKPRLRLWGEALTLAEKLGVAHMHVTLADERHYACATVILES</sequence>
<organism>
    <name type="scientific">Salmonella heidelberg (strain SL476)</name>
    <dbReference type="NCBI Taxonomy" id="454169"/>
    <lineage>
        <taxon>Bacteria</taxon>
        <taxon>Pseudomonadati</taxon>
        <taxon>Pseudomonadota</taxon>
        <taxon>Gammaproteobacteria</taxon>
        <taxon>Enterobacterales</taxon>
        <taxon>Enterobacteriaceae</taxon>
        <taxon>Salmonella</taxon>
    </lineage>
</organism>
<reference key="1">
    <citation type="journal article" date="2011" name="J. Bacteriol.">
        <title>Comparative genomics of 28 Salmonella enterica isolates: evidence for CRISPR-mediated adaptive sublineage evolution.</title>
        <authorList>
            <person name="Fricke W.F."/>
            <person name="Mammel M.K."/>
            <person name="McDermott P.F."/>
            <person name="Tartera C."/>
            <person name="White D.G."/>
            <person name="Leclerc J.E."/>
            <person name="Ravel J."/>
            <person name="Cebula T.A."/>
        </authorList>
    </citation>
    <scope>NUCLEOTIDE SEQUENCE [LARGE SCALE GENOMIC DNA]</scope>
    <source>
        <strain>SL476</strain>
    </source>
</reference>
<name>ACPS_SALHS</name>
<comment type="function">
    <text evidence="1">Transfers the 4'-phosphopantetheine moiety from coenzyme A to a Ser of acyl-carrier-protein.</text>
</comment>
<comment type="catalytic activity">
    <reaction evidence="1">
        <text>apo-[ACP] + CoA = holo-[ACP] + adenosine 3',5'-bisphosphate + H(+)</text>
        <dbReference type="Rhea" id="RHEA:12068"/>
        <dbReference type="Rhea" id="RHEA-COMP:9685"/>
        <dbReference type="Rhea" id="RHEA-COMP:9690"/>
        <dbReference type="ChEBI" id="CHEBI:15378"/>
        <dbReference type="ChEBI" id="CHEBI:29999"/>
        <dbReference type="ChEBI" id="CHEBI:57287"/>
        <dbReference type="ChEBI" id="CHEBI:58343"/>
        <dbReference type="ChEBI" id="CHEBI:64479"/>
        <dbReference type="EC" id="2.7.8.7"/>
    </reaction>
</comment>
<comment type="cofactor">
    <cofactor evidence="1">
        <name>Mg(2+)</name>
        <dbReference type="ChEBI" id="CHEBI:18420"/>
    </cofactor>
</comment>
<comment type="subcellular location">
    <subcellularLocation>
        <location evidence="1">Cytoplasm</location>
    </subcellularLocation>
</comment>
<comment type="similarity">
    <text evidence="1">Belongs to the P-Pant transferase superfamily. AcpS family.</text>
</comment>
<gene>
    <name evidence="1" type="primary">acpS</name>
    <name type="ordered locus">SeHA_C2843</name>
</gene>
<keyword id="KW-0963">Cytoplasm</keyword>
<keyword id="KW-0275">Fatty acid biosynthesis</keyword>
<keyword id="KW-0276">Fatty acid metabolism</keyword>
<keyword id="KW-0444">Lipid biosynthesis</keyword>
<keyword id="KW-0443">Lipid metabolism</keyword>
<keyword id="KW-0460">Magnesium</keyword>
<keyword id="KW-0479">Metal-binding</keyword>
<keyword id="KW-0808">Transferase</keyword>